<proteinExistence type="evidence at protein level"/>
<dbReference type="EMBL" id="L06237">
    <property type="protein sequence ID" value="AAA18904.1"/>
    <property type="molecule type" value="mRNA"/>
</dbReference>
<dbReference type="EMBL" id="BN001084">
    <property type="protein sequence ID" value="CAM06633.1"/>
    <property type="molecule type" value="mRNA"/>
</dbReference>
<dbReference type="EMBL" id="AC012609">
    <property type="status" value="NOT_ANNOTATED_CDS"/>
    <property type="molecule type" value="Genomic_DNA"/>
</dbReference>
<dbReference type="EMBL" id="AC093218">
    <property type="status" value="NOT_ANNOTATED_CDS"/>
    <property type="molecule type" value="Genomic_DNA"/>
</dbReference>
<dbReference type="EMBL" id="CH471084">
    <property type="protein sequence ID" value="EAW95697.1"/>
    <property type="molecule type" value="Genomic_DNA"/>
</dbReference>
<dbReference type="CCDS" id="CCDS4012.1"/>
<dbReference type="RefSeq" id="NP_005900.2">
    <property type="nucleotide sequence ID" value="NM_005909.5"/>
</dbReference>
<dbReference type="BioGRID" id="110304">
    <property type="interactions" value="513"/>
</dbReference>
<dbReference type="CORUM" id="P46821"/>
<dbReference type="DIP" id="DIP-33474N"/>
<dbReference type="FunCoup" id="P46821">
    <property type="interactions" value="968"/>
</dbReference>
<dbReference type="IntAct" id="P46821">
    <property type="interactions" value="126"/>
</dbReference>
<dbReference type="MINT" id="P46821"/>
<dbReference type="STRING" id="9606.ENSP00000296755"/>
<dbReference type="ChEMBL" id="CHEMBL3217382"/>
<dbReference type="DrugBank" id="DB13318">
    <property type="generic name" value="Demecolcine"/>
</dbReference>
<dbReference type="CarbonylDB" id="P46821"/>
<dbReference type="GlyCosmos" id="P46821">
    <property type="glycosylation" value="4 sites, 1 glycan"/>
</dbReference>
<dbReference type="GlyGen" id="P46821">
    <property type="glycosylation" value="4 sites, 1 O-linked glycan (4 sites)"/>
</dbReference>
<dbReference type="iPTMnet" id="P46821"/>
<dbReference type="MetOSite" id="P46821"/>
<dbReference type="PhosphoSitePlus" id="P46821"/>
<dbReference type="SwissPalm" id="P46821"/>
<dbReference type="BioMuta" id="MAP1B"/>
<dbReference type="DMDM" id="317373388"/>
<dbReference type="jPOST" id="P46821"/>
<dbReference type="MassIVE" id="P46821"/>
<dbReference type="PaxDb" id="9606-ENSP00000296755"/>
<dbReference type="PeptideAtlas" id="P46821"/>
<dbReference type="ProteomicsDB" id="55766"/>
<dbReference type="Pumba" id="P46821"/>
<dbReference type="Antibodypedia" id="4064">
    <property type="antibodies" value="304 antibodies from 35 providers"/>
</dbReference>
<dbReference type="DNASU" id="4131"/>
<dbReference type="Ensembl" id="ENST00000296755.12">
    <property type="protein sequence ID" value="ENSP00000296755.7"/>
    <property type="gene ID" value="ENSG00000131711.15"/>
</dbReference>
<dbReference type="GeneID" id="4131"/>
<dbReference type="KEGG" id="hsa:4131"/>
<dbReference type="MANE-Select" id="ENST00000296755.12">
    <property type="protein sequence ID" value="ENSP00000296755.7"/>
    <property type="RefSeq nucleotide sequence ID" value="NM_005909.5"/>
    <property type="RefSeq protein sequence ID" value="NP_005900.2"/>
</dbReference>
<dbReference type="UCSC" id="uc003kbw.5">
    <property type="organism name" value="human"/>
</dbReference>
<dbReference type="AGR" id="HGNC:6836"/>
<dbReference type="CTD" id="4131"/>
<dbReference type="DisGeNET" id="4131"/>
<dbReference type="GeneCards" id="MAP1B"/>
<dbReference type="HGNC" id="HGNC:6836">
    <property type="gene designation" value="MAP1B"/>
</dbReference>
<dbReference type="HPA" id="ENSG00000131711">
    <property type="expression patterns" value="Group enriched (brain, retina)"/>
</dbReference>
<dbReference type="MalaCards" id="MAP1B"/>
<dbReference type="MIM" id="157129">
    <property type="type" value="gene"/>
</dbReference>
<dbReference type="MIM" id="618918">
    <property type="type" value="phenotype"/>
</dbReference>
<dbReference type="MIM" id="619808">
    <property type="type" value="phenotype"/>
</dbReference>
<dbReference type="neXtProt" id="NX_P46821"/>
<dbReference type="OpenTargets" id="ENSG00000131711"/>
<dbReference type="Orphanet" id="98892">
    <property type="disease" value="Periventricular nodular heterotopia"/>
</dbReference>
<dbReference type="Orphanet" id="90635">
    <property type="disease" value="Rare autosomal dominant non-syndromic sensorineural deafness type DFNA"/>
</dbReference>
<dbReference type="PharmGKB" id="PA30581"/>
<dbReference type="VEuPathDB" id="HostDB:ENSG00000131711"/>
<dbReference type="eggNOG" id="KOG3592">
    <property type="taxonomic scope" value="Eukaryota"/>
</dbReference>
<dbReference type="GeneTree" id="ENSGT00940000155897"/>
<dbReference type="HOGENOM" id="CLU_000285_0_1_1"/>
<dbReference type="InParanoid" id="P46821"/>
<dbReference type="OMA" id="HDHRSPE"/>
<dbReference type="OrthoDB" id="5371837at2759"/>
<dbReference type="PAN-GO" id="P46821">
    <property type="GO annotations" value="12 GO annotations based on evolutionary models"/>
</dbReference>
<dbReference type="PhylomeDB" id="P46821"/>
<dbReference type="TreeFam" id="TF350229"/>
<dbReference type="PathwayCommons" id="P46821"/>
<dbReference type="Reactome" id="R-HSA-9833110">
    <property type="pathway name" value="RSV-host interactions"/>
</dbReference>
<dbReference type="SignaLink" id="P46821"/>
<dbReference type="SIGNOR" id="P46821"/>
<dbReference type="BioGRID-ORCS" id="4131">
    <property type="hits" value="12 hits in 1160 CRISPR screens"/>
</dbReference>
<dbReference type="ChiTaRS" id="MAP1B">
    <property type="organism name" value="human"/>
</dbReference>
<dbReference type="GeneWiki" id="MAP1B"/>
<dbReference type="GenomeRNAi" id="4131"/>
<dbReference type="Pharos" id="P46821">
    <property type="development level" value="Tchem"/>
</dbReference>
<dbReference type="PRO" id="PR:P46821"/>
<dbReference type="Proteomes" id="UP000005640">
    <property type="component" value="Chromosome 5"/>
</dbReference>
<dbReference type="RNAct" id="P46821">
    <property type="molecule type" value="protein"/>
</dbReference>
<dbReference type="Bgee" id="ENSG00000131711">
    <property type="expression patterns" value="Expressed in lateral nuclear group of thalamus and 215 other cell types or tissues"/>
</dbReference>
<dbReference type="ExpressionAtlas" id="P46821">
    <property type="expression patterns" value="baseline and differential"/>
</dbReference>
<dbReference type="GO" id="GO:0097440">
    <property type="term" value="C:apical dendrite"/>
    <property type="evidence" value="ECO:0000250"/>
    <property type="project" value="ARUK-UCL"/>
</dbReference>
<dbReference type="GO" id="GO:0030424">
    <property type="term" value="C:axon"/>
    <property type="evidence" value="ECO:0000250"/>
    <property type="project" value="ARUK-UCL"/>
</dbReference>
<dbReference type="GO" id="GO:0097441">
    <property type="term" value="C:basal dendrite"/>
    <property type="evidence" value="ECO:0000250"/>
    <property type="project" value="ARUK-UCL"/>
</dbReference>
<dbReference type="GO" id="GO:0005829">
    <property type="term" value="C:cytosol"/>
    <property type="evidence" value="ECO:0000314"/>
    <property type="project" value="HPA"/>
</dbReference>
<dbReference type="GO" id="GO:0030425">
    <property type="term" value="C:dendrite"/>
    <property type="evidence" value="ECO:0000250"/>
    <property type="project" value="ARUK-UCL"/>
</dbReference>
<dbReference type="GO" id="GO:0043197">
    <property type="term" value="C:dendritic spine"/>
    <property type="evidence" value="ECO:0007669"/>
    <property type="project" value="UniProtKB-SubCell"/>
</dbReference>
<dbReference type="GO" id="GO:0098978">
    <property type="term" value="C:glutamatergic synapse"/>
    <property type="evidence" value="ECO:0007669"/>
    <property type="project" value="Ensembl"/>
</dbReference>
<dbReference type="GO" id="GO:0030426">
    <property type="term" value="C:growth cone"/>
    <property type="evidence" value="ECO:0007669"/>
    <property type="project" value="Ensembl"/>
</dbReference>
<dbReference type="GO" id="GO:0097457">
    <property type="term" value="C:hippocampal mossy fiber"/>
    <property type="evidence" value="ECO:0000250"/>
    <property type="project" value="ARUK-UCL"/>
</dbReference>
<dbReference type="GO" id="GO:0005874">
    <property type="term" value="C:microtubule"/>
    <property type="evidence" value="ECO:0000250"/>
    <property type="project" value="ARUK-UCL"/>
</dbReference>
<dbReference type="GO" id="GO:0005875">
    <property type="term" value="C:microtubule associated complex"/>
    <property type="evidence" value="ECO:0000318"/>
    <property type="project" value="GO_Central"/>
</dbReference>
<dbReference type="GO" id="GO:0043025">
    <property type="term" value="C:neuronal cell body"/>
    <property type="evidence" value="ECO:0000250"/>
    <property type="project" value="ARUK-UCL"/>
</dbReference>
<dbReference type="GO" id="GO:0043204">
    <property type="term" value="C:perikaryon"/>
    <property type="evidence" value="ECO:0007669"/>
    <property type="project" value="Ensembl"/>
</dbReference>
<dbReference type="GO" id="GO:0048471">
    <property type="term" value="C:perinuclear region of cytoplasm"/>
    <property type="evidence" value="ECO:0007669"/>
    <property type="project" value="Ensembl"/>
</dbReference>
<dbReference type="GO" id="GO:0001750">
    <property type="term" value="C:photoreceptor outer segment"/>
    <property type="evidence" value="ECO:0007669"/>
    <property type="project" value="Ensembl"/>
</dbReference>
<dbReference type="GO" id="GO:0005886">
    <property type="term" value="C:plasma membrane"/>
    <property type="evidence" value="ECO:0000314"/>
    <property type="project" value="DFLAT"/>
</dbReference>
<dbReference type="GO" id="GO:0014069">
    <property type="term" value="C:postsynaptic density"/>
    <property type="evidence" value="ECO:0007669"/>
    <property type="project" value="Ensembl"/>
</dbReference>
<dbReference type="GO" id="GO:0036477">
    <property type="term" value="C:somatodendritic compartment"/>
    <property type="evidence" value="ECO:0000250"/>
    <property type="project" value="ARUK-UCL"/>
</dbReference>
<dbReference type="GO" id="GO:0045202">
    <property type="term" value="C:synapse"/>
    <property type="evidence" value="ECO:0000318"/>
    <property type="project" value="GO_Central"/>
</dbReference>
<dbReference type="GO" id="GO:0043196">
    <property type="term" value="C:varicosity"/>
    <property type="evidence" value="ECO:0007669"/>
    <property type="project" value="Ensembl"/>
</dbReference>
<dbReference type="GO" id="GO:0003779">
    <property type="term" value="F:actin binding"/>
    <property type="evidence" value="ECO:0000318"/>
    <property type="project" value="GO_Central"/>
</dbReference>
<dbReference type="GO" id="GO:0008017">
    <property type="term" value="F:microtubule binding"/>
    <property type="evidence" value="ECO:0000250"/>
    <property type="project" value="ARUK-UCL"/>
</dbReference>
<dbReference type="GO" id="GO:0005543">
    <property type="term" value="F:phospholipid binding"/>
    <property type="evidence" value="ECO:0007669"/>
    <property type="project" value="Ensembl"/>
</dbReference>
<dbReference type="GO" id="GO:0044877">
    <property type="term" value="F:protein-containing complex binding"/>
    <property type="evidence" value="ECO:0007669"/>
    <property type="project" value="Ensembl"/>
</dbReference>
<dbReference type="GO" id="GO:0005198">
    <property type="term" value="F:structural molecule activity"/>
    <property type="evidence" value="ECO:0000303"/>
    <property type="project" value="ProtInc"/>
</dbReference>
<dbReference type="GO" id="GO:0048675">
    <property type="term" value="P:axon extension"/>
    <property type="evidence" value="ECO:0000304"/>
    <property type="project" value="ARUK-UCL"/>
</dbReference>
<dbReference type="GO" id="GO:0007409">
    <property type="term" value="P:axonogenesis"/>
    <property type="evidence" value="ECO:0000318"/>
    <property type="project" value="GO_Central"/>
</dbReference>
<dbReference type="GO" id="GO:0071363">
    <property type="term" value="P:cellular response to growth factor stimulus"/>
    <property type="evidence" value="ECO:0007669"/>
    <property type="project" value="Ensembl"/>
</dbReference>
<dbReference type="GO" id="GO:0071375">
    <property type="term" value="P:cellular response to peptide hormone stimulus"/>
    <property type="evidence" value="ECO:0007669"/>
    <property type="project" value="Ensembl"/>
</dbReference>
<dbReference type="GO" id="GO:0016358">
    <property type="term" value="P:dendrite development"/>
    <property type="evidence" value="ECO:0000318"/>
    <property type="project" value="GO_Central"/>
</dbReference>
<dbReference type="GO" id="GO:0021700">
    <property type="term" value="P:developmental maturation"/>
    <property type="evidence" value="ECO:0007669"/>
    <property type="project" value="Ensembl"/>
</dbReference>
<dbReference type="GO" id="GO:0061162">
    <property type="term" value="P:establishment of monopolar cell polarity"/>
    <property type="evidence" value="ECO:0007669"/>
    <property type="project" value="Ensembl"/>
</dbReference>
<dbReference type="GO" id="GO:0051915">
    <property type="term" value="P:induction of synaptic plasticity by chemical substance"/>
    <property type="evidence" value="ECO:0007669"/>
    <property type="project" value="Ensembl"/>
</dbReference>
<dbReference type="GO" id="GO:0001578">
    <property type="term" value="P:microtubule bundle formation"/>
    <property type="evidence" value="ECO:0007669"/>
    <property type="project" value="Ensembl"/>
</dbReference>
<dbReference type="GO" id="GO:0000226">
    <property type="term" value="P:microtubule cytoskeleton organization"/>
    <property type="evidence" value="ECO:0000318"/>
    <property type="project" value="GO_Central"/>
</dbReference>
<dbReference type="GO" id="GO:0047497">
    <property type="term" value="P:mitochondrion transport along microtubule"/>
    <property type="evidence" value="ECO:0007669"/>
    <property type="project" value="Ensembl"/>
</dbReference>
<dbReference type="GO" id="GO:0032387">
    <property type="term" value="P:negative regulation of intracellular transport"/>
    <property type="evidence" value="ECO:0007669"/>
    <property type="project" value="Ensembl"/>
</dbReference>
<dbReference type="GO" id="GO:0007026">
    <property type="term" value="P:negative regulation of microtubule depolymerization"/>
    <property type="evidence" value="ECO:0007669"/>
    <property type="project" value="Ensembl"/>
</dbReference>
<dbReference type="GO" id="GO:0001764">
    <property type="term" value="P:neuron migration"/>
    <property type="evidence" value="ECO:0000304"/>
    <property type="project" value="ARUK-UCL"/>
</dbReference>
<dbReference type="GO" id="GO:0031175">
    <property type="term" value="P:neuron projection development"/>
    <property type="evidence" value="ECO:0000315"/>
    <property type="project" value="UniProtKB"/>
</dbReference>
<dbReference type="GO" id="GO:0071895">
    <property type="term" value="P:odontoblast differentiation"/>
    <property type="evidence" value="ECO:0000314"/>
    <property type="project" value="GO_Central"/>
</dbReference>
<dbReference type="GO" id="GO:0014012">
    <property type="term" value="P:peripheral nervous system axon regeneration"/>
    <property type="evidence" value="ECO:0007669"/>
    <property type="project" value="Ensembl"/>
</dbReference>
<dbReference type="GO" id="GO:0045773">
    <property type="term" value="P:positive regulation of axon extension"/>
    <property type="evidence" value="ECO:0007669"/>
    <property type="project" value="Ensembl"/>
</dbReference>
<dbReference type="GO" id="GO:0031116">
    <property type="term" value="P:positive regulation of microtubule polymerization"/>
    <property type="evidence" value="ECO:0007669"/>
    <property type="project" value="Ensembl"/>
</dbReference>
<dbReference type="GO" id="GO:0045666">
    <property type="term" value="P:positive regulation of neuron differentiation"/>
    <property type="evidence" value="ECO:0007669"/>
    <property type="project" value="Ensembl"/>
</dbReference>
<dbReference type="GO" id="GO:0031114">
    <property type="term" value="P:regulation of microtubule depolymerization"/>
    <property type="evidence" value="ECO:0000318"/>
    <property type="project" value="GO_Central"/>
</dbReference>
<dbReference type="GO" id="GO:0150052">
    <property type="term" value="P:regulation of postsynapse assembly"/>
    <property type="evidence" value="ECO:0007669"/>
    <property type="project" value="Ensembl"/>
</dbReference>
<dbReference type="GO" id="GO:0009743">
    <property type="term" value="P:response to carbohydrate"/>
    <property type="evidence" value="ECO:0007669"/>
    <property type="project" value="Ensembl"/>
</dbReference>
<dbReference type="GO" id="GO:0032355">
    <property type="term" value="P:response to estradiol"/>
    <property type="evidence" value="ECO:0007669"/>
    <property type="project" value="Ensembl"/>
</dbReference>
<dbReference type="GO" id="GO:0017085">
    <property type="term" value="P:response to insecticide"/>
    <property type="evidence" value="ECO:0007669"/>
    <property type="project" value="Ensembl"/>
</dbReference>
<dbReference type="GO" id="GO:0009612">
    <property type="term" value="P:response to mechanical stimulus"/>
    <property type="evidence" value="ECO:0007669"/>
    <property type="project" value="Ensembl"/>
</dbReference>
<dbReference type="GO" id="GO:0033189">
    <property type="term" value="P:response to vitamin A"/>
    <property type="evidence" value="ECO:0007669"/>
    <property type="project" value="Ensembl"/>
</dbReference>
<dbReference type="GO" id="GO:0009410">
    <property type="term" value="P:response to xenobiotic stimulus"/>
    <property type="evidence" value="ECO:0007669"/>
    <property type="project" value="Ensembl"/>
</dbReference>
<dbReference type="GO" id="GO:0007416">
    <property type="term" value="P:synapse assembly"/>
    <property type="evidence" value="ECO:0007669"/>
    <property type="project" value="Ensembl"/>
</dbReference>
<dbReference type="InterPro" id="IPR026074">
    <property type="entry name" value="MAP1"/>
</dbReference>
<dbReference type="InterPro" id="IPR056617">
    <property type="entry name" value="MAP1B/S_N"/>
</dbReference>
<dbReference type="InterPro" id="IPR000102">
    <property type="entry name" value="MAP1B_neuraxin"/>
</dbReference>
<dbReference type="PANTHER" id="PTHR13843">
    <property type="entry name" value="MICROTUBULE-ASSOCIATED PROTEIN"/>
    <property type="match status" value="1"/>
</dbReference>
<dbReference type="PANTHER" id="PTHR13843:SF5">
    <property type="entry name" value="MICROTUBULE-ASSOCIATED PROTEIN 1B"/>
    <property type="match status" value="1"/>
</dbReference>
<dbReference type="Pfam" id="PF00414">
    <property type="entry name" value="MAP1B_neuraxin"/>
    <property type="match status" value="5"/>
</dbReference>
<dbReference type="Pfam" id="PF23415">
    <property type="entry name" value="MAPB1_N"/>
    <property type="match status" value="1"/>
</dbReference>
<dbReference type="Pfam" id="PF25281">
    <property type="entry name" value="MBL_MAP1B"/>
    <property type="match status" value="1"/>
</dbReference>
<dbReference type="PROSITE" id="PS00230">
    <property type="entry name" value="MAP1B_NEURAXIN"/>
    <property type="match status" value="6"/>
</dbReference>
<comment type="function">
    <text evidence="1 10 17">Facilitates tyrosination of alpha-tubulin in neuronal microtubules (By similarity). Phosphorylated MAP1B is required for proper microtubule dynamics and plays a role in the cytoskeletal changes that accompany neuronal differentiation and neurite extension (PubMed:33268592). Possibly MAP1B binds to at least two tubulin subunits in the polymer, and this bridging of subunits might be involved in nucleating microtubule polymerization and in stabilizing microtubules. Acts as a positive cofactor in DAPK1-mediated autophagic vesicle formation and membrane blebbing.</text>
</comment>
<comment type="subunit">
    <text evidence="2 5 7 8 10 12 13">3 different light chains, LC1 (a cleavage product of MAP1B), LC2 (a cleavage product of MAP1A) and LC3 (produced by one of the MAP1LC3 genes), can associate with the MAP1A or MAP1B heavy chains. LC1 interacts with the amino-terminal region of MAP1B. Interacts with ANP32A and TIAM2. Interacts with the tubulin tyrosine TTL (By similarity). Interacts (via C-terminus) with GAN (via Kelch domains) (PubMed:12147674, PubMed:16227972). Interacts (via N-terminus) with DAPK1 (PubMed:18195017). Interacts with TMEM185A (PubMed:15525354). Interacts with MAP1LC3B (PubMed:24089205). Interacts with KIRREL3 (PubMed:25902260).</text>
</comment>
<comment type="subunit">
    <molecule>MAP1 light chain LC1</molecule>
    <text evidence="2">Interacts (via C-terminus) with ELAVL4; the interaction contributes to the association of ELAVL4 with microtubules. Interacts with ELAVL2 and ELAVL3.</text>
</comment>
<comment type="interaction">
    <interactant intactId="EBI-764611">
        <id>P46821</id>
    </interactant>
    <interactant intactId="EBI-764342">
        <id>Q9H2C0</id>
        <label>GAN</label>
    </interactant>
    <organismsDiffer>false</organismsDiffer>
    <experiments>3</experiments>
</comment>
<comment type="interaction">
    <interactant intactId="EBI-764611">
        <id>P46821</id>
    </interactant>
    <interactant intactId="EBI-1182222">
        <id>P50406</id>
        <label>HTR6</label>
    </interactant>
    <organismsDiffer>false</organismsDiffer>
    <experiments>4</experiments>
</comment>
<comment type="interaction">
    <interactant intactId="EBI-764611">
        <id>P46821</id>
    </interactant>
    <interactant intactId="EBI-366083">
        <id>P04637</id>
        <label>TP53</label>
    </interactant>
    <organismsDiffer>false</organismsDiffer>
    <experiments>6</experiments>
</comment>
<comment type="interaction">
    <interactant intactId="EBI-9517186">
        <id>PRO_0000018605</id>
    </interactant>
    <interactant intactId="EBI-16427312">
        <id>Q8IZU9</id>
        <label>KIRREL3</label>
    </interactant>
    <organismsDiffer>false</organismsDiffer>
    <experiments>4</experiments>
</comment>
<comment type="interaction">
    <interactant intactId="EBI-9517186">
        <id>PRO_0000018605</id>
    </interactant>
    <interactant intactId="EBI-5323863">
        <id>Q5S007</id>
        <label>LRRK2</label>
    </interactant>
    <organismsDiffer>false</organismsDiffer>
    <experiments>5</experiments>
</comment>
<comment type="subcellular location">
    <subcellularLocation>
        <location evidence="10">Cytoplasm</location>
        <location evidence="10">Cytoskeleton</location>
    </subcellularLocation>
    <subcellularLocation>
        <location evidence="10">Cytoplasm</location>
    </subcellularLocation>
    <subcellularLocation>
        <location evidence="1">Synapse</location>
    </subcellularLocation>
    <subcellularLocation>
        <location evidence="1">Cell projection</location>
        <location evidence="1">Dendritic spine</location>
    </subcellularLocation>
    <text evidence="1">Colocalizes with DAPK1 in the microtubules and cortical actin fibers.</text>
</comment>
<comment type="subcellular location">
    <molecule>MAP1 light chain LC1</molecule>
    <subcellularLocation>
        <location evidence="2">Cytoplasm</location>
    </subcellularLocation>
</comment>
<comment type="domain">
    <text>Has a highly basic region with many copies of the sequence KKEE and KKEI/V, repeated but not at fixed intervals, which is responsible for the binding of MAP1B to microtubules.</text>
</comment>
<comment type="PTM">
    <text evidence="11">LC1 is generated from MAP1B by proteolytic processing.</text>
</comment>
<comment type="PTM">
    <text evidence="1">S-nitrosylation at Cys-2464 enhances interaction with microtubules, and may act as an effector modification for neuronal nitric oxide synthase control of growth-cone size, growth-cone collapse and axon retraction.</text>
</comment>
<comment type="disease" evidence="14 15 16">
    <disease id="DI-05862">
        <name>Periventricular nodular heterotopia 9</name>
        <acronym>PVNH9</acronym>
        <description>A form of periventricular nodular heterotopia, a disorder resulting from a defect in the pattern of neuronal migration in which ectopic collections of neurons lie along the lateral ventricles of the brain or just beneath, contiguously or in isolated patches. PVNH9 is an autosomal dominant disorder with incomplete penetrance, characterized by impaired intellectual development, cognitive defects, learning disabilities, and behavior abnormalities. Some patients develop seizures.</description>
        <dbReference type="MIM" id="618918"/>
    </disease>
    <text>The disease is caused by variants affecting the gene represented in this entry.</text>
</comment>
<comment type="disease" evidence="17">
    <disease id="DI-06384">
        <name>Deafness, autosomal dominant, 83</name>
        <acronym>DFNA83</acronym>
        <description>A form of non-syndromic, sensorineural hearing loss. Sensorineural hearing loss results from damage to the neural receptors of the inner ear, the nerve pathways to the brain, or the area of the brain that receives sound information. DNFA83 is characterized by progressive, mild to profound hearing loss.</description>
        <dbReference type="MIM" id="619808"/>
    </disease>
    <text>The disease may be caused by variants affecting the gene represented in this entry.</text>
</comment>
<comment type="similarity">
    <text evidence="21">Belongs to the MAP1 family.</text>
</comment>
<organism>
    <name type="scientific">Homo sapiens</name>
    <name type="common">Human</name>
    <dbReference type="NCBI Taxonomy" id="9606"/>
    <lineage>
        <taxon>Eukaryota</taxon>
        <taxon>Metazoa</taxon>
        <taxon>Chordata</taxon>
        <taxon>Craniata</taxon>
        <taxon>Vertebrata</taxon>
        <taxon>Euteleostomi</taxon>
        <taxon>Mammalia</taxon>
        <taxon>Eutheria</taxon>
        <taxon>Euarchontoglires</taxon>
        <taxon>Primates</taxon>
        <taxon>Haplorrhini</taxon>
        <taxon>Catarrhini</taxon>
        <taxon>Hominidae</taxon>
        <taxon>Homo</taxon>
    </lineage>
</organism>
<feature type="initiator methionine" description="Removed" evidence="20 28">
    <location>
        <position position="1"/>
    </location>
</feature>
<feature type="chain" id="PRO_0000018604" description="Microtubule-associated protein 1B">
    <location>
        <begin position="2"/>
        <end position="2468"/>
    </location>
</feature>
<feature type="chain" id="PRO_0000418379" description="MAP1B heavy chain">
    <location>
        <begin position="2"/>
        <end position="2206"/>
    </location>
</feature>
<feature type="chain" id="PRO_0000018605" description="MAP1 light chain LC1">
    <location>
        <begin position="2207"/>
        <end position="2468"/>
    </location>
</feature>
<feature type="repeat" description="MAP1B 1">
    <location>
        <begin position="1878"/>
        <end position="1894"/>
    </location>
</feature>
<feature type="repeat" description="MAP1B 2">
    <location>
        <begin position="1895"/>
        <end position="1911"/>
    </location>
</feature>
<feature type="repeat" description="MAP1B 3">
    <location>
        <begin position="1912"/>
        <end position="1928"/>
    </location>
</feature>
<feature type="repeat" description="MAP1B 4">
    <location>
        <begin position="1929"/>
        <end position="1945"/>
    </location>
</feature>
<feature type="repeat" description="MAP1B 5">
    <location>
        <begin position="1946"/>
        <end position="1962"/>
    </location>
</feature>
<feature type="repeat" description="MAP1B 6">
    <location>
        <begin position="1963"/>
        <end position="1979"/>
    </location>
</feature>
<feature type="repeat" description="MAP1B 7">
    <location>
        <begin position="1997"/>
        <end position="2013"/>
    </location>
</feature>
<feature type="repeat" description="MAP1B 8">
    <location>
        <begin position="2014"/>
        <end position="2030"/>
    </location>
</feature>
<feature type="repeat" description="MAP1B 9">
    <location>
        <begin position="2031"/>
        <end position="2047"/>
    </location>
</feature>
<feature type="repeat" description="MAP1B 10">
    <location>
        <begin position="2048"/>
        <end position="2064"/>
    </location>
</feature>
<feature type="region of interest" description="Disordered" evidence="4">
    <location>
        <begin position="1"/>
        <end position="26"/>
    </location>
</feature>
<feature type="region of interest" description="Disordered" evidence="4">
    <location>
        <begin position="522"/>
        <end position="781"/>
    </location>
</feature>
<feature type="region of interest" description="Disordered" evidence="4">
    <location>
        <begin position="872"/>
        <end position="1045"/>
    </location>
</feature>
<feature type="region of interest" description="Disordered" evidence="4">
    <location>
        <begin position="1058"/>
        <end position="1160"/>
    </location>
</feature>
<feature type="region of interest" description="Disordered" evidence="4">
    <location>
        <begin position="1173"/>
        <end position="1220"/>
    </location>
</feature>
<feature type="region of interest" description="Disordered" evidence="4">
    <location>
        <begin position="1238"/>
        <end position="1277"/>
    </location>
</feature>
<feature type="region of interest" description="Disordered" evidence="4">
    <location>
        <begin position="1291"/>
        <end position="1826"/>
    </location>
</feature>
<feature type="region of interest" description="Disordered" evidence="4">
    <location>
        <begin position="1849"/>
        <end position="1896"/>
    </location>
</feature>
<feature type="region of interest" description="Disordered" evidence="4">
    <location>
        <begin position="1911"/>
        <end position="2037"/>
    </location>
</feature>
<feature type="region of interest" description="Disordered" evidence="4">
    <location>
        <begin position="2093"/>
        <end position="2349"/>
    </location>
</feature>
<feature type="region of interest" description="Mediates interaction with TMEM185A" evidence="7">
    <location>
        <begin position="2294"/>
        <end position="2468"/>
    </location>
</feature>
<feature type="compositionally biased region" description="Basic and acidic residues" evidence="4">
    <location>
        <begin position="557"/>
        <end position="741"/>
    </location>
</feature>
<feature type="compositionally biased region" description="Basic and acidic residues" evidence="4">
    <location>
        <begin position="760"/>
        <end position="781"/>
    </location>
</feature>
<feature type="compositionally biased region" description="Acidic residues" evidence="4">
    <location>
        <begin position="901"/>
        <end position="913"/>
    </location>
</feature>
<feature type="compositionally biased region" description="Basic and acidic residues" evidence="4">
    <location>
        <begin position="914"/>
        <end position="923"/>
    </location>
</feature>
<feature type="compositionally biased region" description="Acidic residues" evidence="4">
    <location>
        <begin position="924"/>
        <end position="959"/>
    </location>
</feature>
<feature type="compositionally biased region" description="Basic and acidic residues" evidence="4">
    <location>
        <begin position="977"/>
        <end position="998"/>
    </location>
</feature>
<feature type="compositionally biased region" description="Acidic residues" evidence="4">
    <location>
        <begin position="1014"/>
        <end position="1035"/>
    </location>
</feature>
<feature type="compositionally biased region" description="Polar residues" evidence="4">
    <location>
        <begin position="1064"/>
        <end position="1074"/>
    </location>
</feature>
<feature type="compositionally biased region" description="Acidic residues" evidence="4">
    <location>
        <begin position="1100"/>
        <end position="1111"/>
    </location>
</feature>
<feature type="compositionally biased region" description="Polar residues" evidence="4">
    <location>
        <begin position="1114"/>
        <end position="1130"/>
    </location>
</feature>
<feature type="compositionally biased region" description="Basic and acidic residues" evidence="4">
    <location>
        <begin position="1190"/>
        <end position="1199"/>
    </location>
</feature>
<feature type="compositionally biased region" description="Polar residues" evidence="4">
    <location>
        <begin position="1202"/>
        <end position="1211"/>
    </location>
</feature>
<feature type="compositionally biased region" description="Low complexity" evidence="4">
    <location>
        <begin position="1246"/>
        <end position="1259"/>
    </location>
</feature>
<feature type="compositionally biased region" description="Basic and acidic residues" evidence="4">
    <location>
        <begin position="1306"/>
        <end position="1318"/>
    </location>
</feature>
<feature type="compositionally biased region" description="Polar residues" evidence="4">
    <location>
        <begin position="1322"/>
        <end position="1340"/>
    </location>
</feature>
<feature type="compositionally biased region" description="Polar residues" evidence="4">
    <location>
        <begin position="1435"/>
        <end position="1455"/>
    </location>
</feature>
<feature type="compositionally biased region" description="Basic and acidic residues" evidence="4">
    <location>
        <begin position="1456"/>
        <end position="1480"/>
    </location>
</feature>
<feature type="compositionally biased region" description="Polar residues" evidence="4">
    <location>
        <begin position="1501"/>
        <end position="1511"/>
    </location>
</feature>
<feature type="compositionally biased region" description="Polar residues" evidence="4">
    <location>
        <begin position="1519"/>
        <end position="1530"/>
    </location>
</feature>
<feature type="compositionally biased region" description="Low complexity" evidence="4">
    <location>
        <begin position="1549"/>
        <end position="1561"/>
    </location>
</feature>
<feature type="compositionally biased region" description="Polar residues" evidence="4">
    <location>
        <begin position="1590"/>
        <end position="1607"/>
    </location>
</feature>
<feature type="compositionally biased region" description="Polar residues" evidence="4">
    <location>
        <begin position="1710"/>
        <end position="1727"/>
    </location>
</feature>
<feature type="compositionally biased region" description="Low complexity" evidence="4">
    <location>
        <begin position="1728"/>
        <end position="1739"/>
    </location>
</feature>
<feature type="compositionally biased region" description="Polar residues" evidence="4">
    <location>
        <begin position="1790"/>
        <end position="1806"/>
    </location>
</feature>
<feature type="compositionally biased region" description="Low complexity" evidence="4">
    <location>
        <begin position="1816"/>
        <end position="1826"/>
    </location>
</feature>
<feature type="compositionally biased region" description="Polar residues" evidence="4">
    <location>
        <begin position="1914"/>
        <end position="1930"/>
    </location>
</feature>
<feature type="compositionally biased region" description="Basic and acidic residues" evidence="4">
    <location>
        <begin position="1942"/>
        <end position="1951"/>
    </location>
</feature>
<feature type="compositionally biased region" description="Basic and acidic residues" evidence="4">
    <location>
        <begin position="1975"/>
        <end position="1985"/>
    </location>
</feature>
<feature type="compositionally biased region" description="Polar residues" evidence="4">
    <location>
        <begin position="2007"/>
        <end position="2018"/>
    </location>
</feature>
<feature type="compositionally biased region" description="Low complexity" evidence="4">
    <location>
        <begin position="2027"/>
        <end position="2037"/>
    </location>
</feature>
<feature type="compositionally biased region" description="Polar residues" evidence="4">
    <location>
        <begin position="2146"/>
        <end position="2160"/>
    </location>
</feature>
<feature type="compositionally biased region" description="Basic and acidic residues" evidence="4">
    <location>
        <begin position="2279"/>
        <end position="2300"/>
    </location>
</feature>
<feature type="compositionally biased region" description="Basic and acidic residues" evidence="4">
    <location>
        <begin position="2309"/>
        <end position="2321"/>
    </location>
</feature>
<feature type="compositionally biased region" description="Low complexity" evidence="4">
    <location>
        <begin position="2322"/>
        <end position="2349"/>
    </location>
</feature>
<feature type="modified residue" description="N-acetylalanine" evidence="20 28">
    <location>
        <position position="2"/>
    </location>
</feature>
<feature type="modified residue" description="Phosphoserine" evidence="23">
    <location>
        <position position="336"/>
    </location>
</feature>
<feature type="modified residue" description="Phosphoserine" evidence="2">
    <location>
        <position position="339"/>
    </location>
</feature>
<feature type="modified residue" description="Phosphoserine" evidence="29">
    <location>
        <position position="343"/>
    </location>
</feature>
<feature type="modified residue" description="Phosphothreonine" evidence="3">
    <location>
        <position position="527"/>
    </location>
</feature>
<feature type="modified residue" description="Phosphoserine" evidence="29">
    <location>
        <position position="541"/>
    </location>
</feature>
<feature type="modified residue" description="Phosphoserine" evidence="2">
    <location>
        <position position="544"/>
    </location>
</feature>
<feature type="modified residue" description="Phosphoserine" evidence="2">
    <location>
        <position position="561"/>
    </location>
</feature>
<feature type="modified residue" description="Phosphoserine" evidence="29">
    <location>
        <position position="614"/>
    </location>
</feature>
<feature type="modified residue" description="Phosphoserine" evidence="28">
    <location>
        <position position="828"/>
    </location>
</feature>
<feature type="modified residue" description="Phosphoserine" evidence="27 28 29 30">
    <location>
        <position position="831"/>
    </location>
</feature>
<feature type="modified residue" description="Phosphoserine" evidence="27 28 29 30">
    <location>
        <position position="832"/>
    </location>
</feature>
<feature type="modified residue" description="Phosphoserine" evidence="2">
    <location>
        <position position="891"/>
    </location>
</feature>
<feature type="modified residue" description="Phosphothreonine" evidence="2">
    <location>
        <position position="899"/>
    </location>
</feature>
<feature type="modified residue" description="Phosphothreonine" evidence="2">
    <location>
        <position position="908"/>
    </location>
</feature>
<feature type="modified residue" description="Phosphoserine" evidence="3">
    <location>
        <position position="936"/>
    </location>
</feature>
<feature type="modified residue" description="Phosphoserine" evidence="28 29">
    <location>
        <position position="937"/>
    </location>
</feature>
<feature type="modified residue" description="Phosphothreonine" evidence="29">
    <location>
        <position position="948"/>
    </location>
</feature>
<feature type="modified residue" description="Phosphoserine" evidence="2">
    <location>
        <position position="970"/>
    </location>
</feature>
<feature type="modified residue" description="Phosphoserine" evidence="2">
    <location>
        <position position="977"/>
    </location>
</feature>
<feature type="modified residue" description="Phosphoserine" evidence="22 28">
    <location>
        <position position="992"/>
    </location>
</feature>
<feature type="modified residue" description="Phosphoserine" evidence="22 28 29">
    <location>
        <position position="995"/>
    </location>
</feature>
<feature type="modified residue" description="Phosphoserine" evidence="22 25 28 29">
    <location>
        <position position="1016"/>
    </location>
</feature>
<feature type="modified residue" description="Phosphoserine" evidence="28 29">
    <location>
        <position position="1144"/>
    </location>
</feature>
<feature type="modified residue" description="Phosphoserine" evidence="28 29">
    <location>
        <position position="1154"/>
    </location>
</feature>
<feature type="modified residue" description="Phosphoserine" evidence="28">
    <location>
        <position position="1156"/>
    </location>
</feature>
<feature type="modified residue" description="Phosphoserine" evidence="3">
    <location>
        <position position="1187"/>
    </location>
</feature>
<feature type="modified residue" description="Phosphoserine" evidence="3">
    <location>
        <position position="1190"/>
    </location>
</feature>
<feature type="modified residue" description="Phosphoserine" evidence="28 29">
    <location>
        <position position="1208"/>
    </location>
</feature>
<feature type="modified residue" description="Phosphoserine" evidence="2">
    <location>
        <position position="1211"/>
    </location>
</feature>
<feature type="modified residue" description="Phosphoserine" evidence="2">
    <location>
        <position position="1212"/>
    </location>
</feature>
<feature type="modified residue" description="Phosphoserine" evidence="2">
    <location>
        <position position="1229"/>
    </location>
</feature>
<feature type="modified residue" description="Phosphoserine" evidence="2">
    <location>
        <position position="1247"/>
    </location>
</feature>
<feature type="modified residue" description="Phosphoserine" evidence="28 29">
    <location>
        <position position="1252"/>
    </location>
</feature>
<feature type="modified residue" description="Phosphoserine" evidence="28 29">
    <location>
        <position position="1256"/>
    </location>
</feature>
<feature type="modified residue" description="Phosphoserine" evidence="2">
    <location>
        <position position="1258"/>
    </location>
</feature>
<feature type="modified residue" description="Phosphoserine" evidence="28 29">
    <location>
        <position position="1260"/>
    </location>
</feature>
<feature type="modified residue" description="Phosphoserine" evidence="29">
    <location>
        <position position="1262"/>
    </location>
</feature>
<feature type="modified residue" description="Phosphoserine" evidence="22 28 29 30">
    <location>
        <position position="1265"/>
    </location>
</feature>
<feature type="modified residue" description="Phosphoserine" evidence="22 29">
    <location>
        <position position="1276"/>
    </location>
</feature>
<feature type="modified residue" description="Phosphoserine" evidence="22">
    <location>
        <position position="1280"/>
    </location>
</feature>
<feature type="modified residue" description="Phosphothreonine" evidence="22 28 29">
    <location>
        <position position="1282"/>
    </location>
</feature>
<feature type="modified residue" description="Phosphoserine" evidence="29">
    <location>
        <position position="1298"/>
    </location>
</feature>
<feature type="modified residue" description="Phosphoserine" evidence="2">
    <location>
        <position position="1312"/>
    </location>
</feature>
<feature type="modified residue" description="Phosphoserine" evidence="29">
    <location>
        <position position="1322"/>
    </location>
</feature>
<feature type="modified residue" description="Phosphoserine" evidence="2">
    <location>
        <position position="1324"/>
    </location>
</feature>
<feature type="modified residue" description="Phosphoserine" evidence="2">
    <location>
        <position position="1326"/>
    </location>
</feature>
<feature type="modified residue" description="Phosphothreonine" evidence="2">
    <location>
        <position position="1328"/>
    </location>
</feature>
<feature type="modified residue" description="Phosphoserine" evidence="2">
    <location>
        <position position="1330"/>
    </location>
</feature>
<feature type="modified residue" description="Phosphoserine" evidence="2">
    <location>
        <position position="1339"/>
    </location>
</feature>
<feature type="modified residue" description="Phosphoserine" evidence="2">
    <location>
        <position position="1376"/>
    </location>
</feature>
<feature type="modified residue" description="Phosphoserine" evidence="28">
    <location>
        <position position="1378"/>
    </location>
</feature>
<feature type="modified residue" description="Phosphoserine" evidence="28">
    <location>
        <position position="1387"/>
    </location>
</feature>
<feature type="modified residue" description="Phosphoserine" evidence="28 29">
    <location>
        <position position="1389"/>
    </location>
</feature>
<feature type="modified residue" description="Phosphoserine" evidence="22 27 29">
    <location>
        <position position="1396"/>
    </location>
</feature>
<feature type="modified residue" description="Phosphoserine" evidence="22 27 28 29 30">
    <location>
        <position position="1400"/>
    </location>
</feature>
<feature type="modified residue" description="Phosphoserine" evidence="2">
    <location>
        <position position="1408"/>
    </location>
</feature>
<feature type="modified residue" description="Phosphotyrosine" evidence="2">
    <location>
        <position position="1410"/>
    </location>
</feature>
<feature type="modified residue" description="Phosphoserine" evidence="22 24 28 29">
    <location>
        <position position="1427"/>
    </location>
</feature>
<feature type="modified residue" description="Phosphoserine" evidence="22 29">
    <location>
        <position position="1438"/>
    </location>
</feature>
<feature type="modified residue" description="Phosphoserine" evidence="22 28 29">
    <location>
        <position position="1443"/>
    </location>
</feature>
<feature type="modified residue" description="Phosphoserine" evidence="27 28 29">
    <location>
        <position position="1501"/>
    </location>
</feature>
<feature type="modified residue" description="Phosphoserine" evidence="2">
    <location>
        <position position="1512"/>
    </location>
</feature>
<feature type="modified residue" description="Phosphoserine" evidence="3">
    <location>
        <position position="1520"/>
    </location>
</feature>
<feature type="modified residue" description="Phosphoserine" evidence="3">
    <location>
        <position position="1522"/>
    </location>
</feature>
<feature type="modified residue" description="Phosphothreonine" evidence="3">
    <location>
        <position position="1525"/>
    </location>
</feature>
<feature type="modified residue" description="Phosphoserine" evidence="2">
    <location>
        <position position="1527"/>
    </location>
</feature>
<feature type="modified residue" description="Phosphoserine" evidence="22">
    <location>
        <position position="1618"/>
    </location>
</feature>
<feature type="modified residue" description="Phosphoserine" evidence="22">
    <location>
        <position position="1620"/>
    </location>
</feature>
<feature type="modified residue" description="Phosphoserine" evidence="22">
    <location>
        <position position="1625"/>
    </location>
</feature>
<feature type="modified residue" description="Phosphoserine" evidence="28 30">
    <location>
        <position position="1653"/>
    </location>
</feature>
<feature type="modified residue" description="Phosphoserine" evidence="3">
    <location>
        <position position="1663"/>
    </location>
</feature>
<feature type="modified residue" description="Phosphoserine" evidence="30">
    <location>
        <position position="1666"/>
    </location>
</feature>
<feature type="modified residue" description="Phosphoserine" evidence="2">
    <location>
        <position position="1690"/>
    </location>
</feature>
<feature type="modified residue" description="Phosphoserine" evidence="2">
    <location>
        <position position="1772"/>
    </location>
</feature>
<feature type="modified residue" description="Phosphoserine" evidence="22 26 28 29">
    <location>
        <position position="1779"/>
    </location>
</feature>
<feature type="modified residue" description="Phosphoserine" evidence="22 28 29">
    <location>
        <position position="1782"/>
    </location>
</feature>
<feature type="modified residue" description="Phosphoserine" evidence="28 29 30">
    <location>
        <position position="1785"/>
    </location>
</feature>
<feature type="modified residue" description="Phosphothreonine" evidence="22 28 29">
    <location>
        <position position="1788"/>
    </location>
</feature>
<feature type="modified residue" description="Phosphoserine" evidence="2">
    <location>
        <position position="1792"/>
    </location>
</feature>
<feature type="modified residue" description="Phosphoserine" evidence="29">
    <location>
        <position position="1793"/>
    </location>
</feature>
<feature type="modified residue" description="Phosphotyrosine" evidence="2">
    <location>
        <position position="1796"/>
    </location>
</feature>
<feature type="modified residue" description="Phosphoserine" evidence="28">
    <location>
        <position position="1797"/>
    </location>
</feature>
<feature type="modified residue" description="Phosphoserine" evidence="2">
    <location>
        <position position="1801"/>
    </location>
</feature>
<feature type="modified residue" description="Phosphoserine" evidence="3">
    <location>
        <position position="1819"/>
    </location>
</feature>
<feature type="modified residue" description="Phosphoserine" evidence="2">
    <location>
        <position position="1881"/>
    </location>
</feature>
<feature type="modified residue" description="Phosphoserine" evidence="29">
    <location>
        <position position="1899"/>
    </location>
</feature>
<feature type="modified residue" description="Phosphoserine" evidence="28 29">
    <location>
        <position position="1915"/>
    </location>
</feature>
<feature type="modified residue" description="Phosphoserine" evidence="28 29">
    <location>
        <position position="1917"/>
    </location>
</feature>
<feature type="modified residue" description="Phosphoserine" evidence="29">
    <location>
        <position position="1919"/>
    </location>
</feature>
<feature type="modified residue" description="Phosphothreonine" evidence="29 30">
    <location>
        <position position="1932"/>
    </location>
</feature>
<feature type="modified residue" description="Phosphoserine" evidence="29">
    <location>
        <position position="1939"/>
    </location>
</feature>
<feature type="modified residue" description="Phosphothreonine" evidence="29">
    <location>
        <position position="1949"/>
    </location>
</feature>
<feature type="modified residue" description="Phosphoserine" evidence="28 29">
    <location>
        <position position="1965"/>
    </location>
</feature>
<feature type="modified residue" description="Phosphothreonine" evidence="29">
    <location>
        <position position="2034"/>
    </location>
</feature>
<feature type="modified residue" description="Phosphoserine" evidence="29">
    <location>
        <position position="2209"/>
    </location>
</feature>
<feature type="modified residue" description="Phosphoserine" evidence="28 29">
    <location>
        <position position="2271"/>
    </location>
</feature>
<feature type="modified residue" description="Phosphoserine" evidence="28">
    <location>
        <position position="2289"/>
    </location>
</feature>
<feature type="modified residue" description="Phosphothreonine" evidence="29">
    <location>
        <position position="2305"/>
    </location>
</feature>
<feature type="modified residue" description="Phosphoserine" evidence="2">
    <location>
        <position position="2414"/>
    </location>
</feature>
<feature type="modified residue" description="S-nitrosocysteine" evidence="2">
    <location>
        <position position="2464"/>
    </location>
</feature>
<feature type="sequence variant" id="VAR_084525" description="In PVNH9." evidence="14">
    <location>
        <begin position="303"/>
        <end position="2468"/>
    </location>
</feature>
<feature type="sequence variant" id="VAR_036016" description="In a colorectal cancer sample; somatic mutation; dbSNP:rs766004582." evidence="9">
    <original>R</original>
    <variation>Q</variation>
    <location>
        <position position="326"/>
    </location>
</feature>
<feature type="sequence variant" id="VAR_084526" description="In PVNH9." evidence="14">
    <location>
        <begin position="532"/>
        <end position="2468"/>
    </location>
</feature>
<feature type="sequence variant" id="VAR_036017" description="In a colorectal cancer sample; somatic mutation; dbSNP:rs369022142." evidence="9">
    <original>V</original>
    <variation>M</variation>
    <location>
        <position position="574"/>
    </location>
</feature>
<feature type="sequence variant" id="VAR_024530" description="In dbSNP:rs1866374." evidence="6 18 19">
    <original>I</original>
    <variation>V</variation>
    <location>
        <position position="594"/>
    </location>
</feature>
<feature type="sequence variant" id="VAR_084527" description="In PVNH9." evidence="16">
    <location>
        <begin position="679"/>
        <end position="2468"/>
    </location>
</feature>
<feature type="sequence variant" id="VAR_030347" description="In dbSNP:rs16876070.">
    <original>E</original>
    <variation>G</variation>
    <location>
        <position position="869"/>
    </location>
</feature>
<feature type="sequence variant" id="VAR_087096" description="In dbSNP:rs143194383." evidence="17">
    <original>I</original>
    <variation>T</variation>
    <location>
        <position position="923"/>
    </location>
</feature>
<feature type="sequence variant" id="VAR_084528" description="In PVNH9; no effect on protein expression." evidence="15">
    <location>
        <begin position="1032"/>
        <end position="2468"/>
    </location>
</feature>
<feature type="sequence variant" id="VAR_084529" description="In PVNH9." evidence="14">
    <location>
        <begin position="1106"/>
        <end position="2468"/>
    </location>
</feature>
<feature type="sequence variant" id="VAR_034105" description="In dbSNP:rs34093016.">
    <original>P</original>
    <variation>L</variation>
    <location>
        <position position="1296"/>
    </location>
</feature>
<feature type="sequence variant" id="VAR_087097" description="In DFNA83; uncertain significance; reduced neurite length in otic sensory neuron-like cells from patient-derived indifferentiated pluripotent stem cells; dbSNP:rs753026898." evidence="17">
    <original>S</original>
    <variation>G</variation>
    <location>
        <position position="1400"/>
    </location>
</feature>
<feature type="sequence variant" id="VAR_084530" description="In PVNH9; no effect on protein expression." evidence="15">
    <location>
        <begin position="1664"/>
        <end position="2468"/>
    </location>
</feature>
<feature type="sequence variant" id="VAR_087098" description="In dbSNP:rs139319889." evidence="17">
    <original>F</original>
    <variation>L</variation>
    <location>
        <position position="1838"/>
    </location>
</feature>
<feature type="sequence variant" id="VAR_056123" description="In dbSNP:rs13153166.">
    <original>S</original>
    <variation>R</variation>
    <location>
        <position position="1917"/>
    </location>
</feature>
<protein>
    <recommendedName>
        <fullName>Microtubule-associated protein 1B</fullName>
        <shortName>MAP-1B</shortName>
    </recommendedName>
    <component>
        <recommendedName>
            <fullName>MAP1B heavy chain</fullName>
        </recommendedName>
    </component>
    <component>
        <recommendedName>
            <fullName>MAP1 light chain LC1</fullName>
        </recommendedName>
    </component>
</protein>
<accession>P46821</accession>
<accession>A2BDK5</accession>
<keyword id="KW-0007">Acetylation</keyword>
<keyword id="KW-0966">Cell projection</keyword>
<keyword id="KW-0963">Cytoplasm</keyword>
<keyword id="KW-0206">Cytoskeleton</keyword>
<keyword id="KW-0209">Deafness</keyword>
<keyword id="KW-0903">Direct protein sequencing</keyword>
<keyword id="KW-0225">Disease variant</keyword>
<keyword id="KW-0493">Microtubule</keyword>
<keyword id="KW-1010">Non-syndromic deafness</keyword>
<keyword id="KW-0597">Phosphoprotein</keyword>
<keyword id="KW-1267">Proteomics identification</keyword>
<keyword id="KW-1185">Reference proteome</keyword>
<keyword id="KW-0677">Repeat</keyword>
<keyword id="KW-0702">S-nitrosylation</keyword>
<keyword id="KW-0770">Synapse</keyword>
<evidence type="ECO:0000250" key="1"/>
<evidence type="ECO:0000250" key="2">
    <source>
        <dbReference type="UniProtKB" id="P14873"/>
    </source>
</evidence>
<evidence type="ECO:0000250" key="3">
    <source>
        <dbReference type="UniProtKB" id="P15205"/>
    </source>
</evidence>
<evidence type="ECO:0000256" key="4">
    <source>
        <dbReference type="SAM" id="MobiDB-lite"/>
    </source>
</evidence>
<evidence type="ECO:0000269" key="5">
    <source>
    </source>
</evidence>
<evidence type="ECO:0000269" key="6">
    <source>
    </source>
</evidence>
<evidence type="ECO:0000269" key="7">
    <source>
    </source>
</evidence>
<evidence type="ECO:0000269" key="8">
    <source>
    </source>
</evidence>
<evidence type="ECO:0000269" key="9">
    <source>
    </source>
</evidence>
<evidence type="ECO:0000269" key="10">
    <source>
    </source>
</evidence>
<evidence type="ECO:0000269" key="11">
    <source>
    </source>
</evidence>
<evidence type="ECO:0000269" key="12">
    <source>
    </source>
</evidence>
<evidence type="ECO:0000269" key="13">
    <source>
    </source>
</evidence>
<evidence type="ECO:0000269" key="14">
    <source>
    </source>
</evidence>
<evidence type="ECO:0000269" key="15">
    <source>
    </source>
</evidence>
<evidence type="ECO:0000269" key="16">
    <source>
    </source>
</evidence>
<evidence type="ECO:0000269" key="17">
    <source>
    </source>
</evidence>
<evidence type="ECO:0000269" key="18">
    <source>
    </source>
</evidence>
<evidence type="ECO:0000269" key="19">
    <source ref="4"/>
</evidence>
<evidence type="ECO:0000269" key="20">
    <source ref="5"/>
</evidence>
<evidence type="ECO:0000305" key="21"/>
<evidence type="ECO:0007744" key="22">
    <source>
    </source>
</evidence>
<evidence type="ECO:0007744" key="23">
    <source>
    </source>
</evidence>
<evidence type="ECO:0007744" key="24">
    <source>
    </source>
</evidence>
<evidence type="ECO:0007744" key="25">
    <source>
    </source>
</evidence>
<evidence type="ECO:0007744" key="26">
    <source>
    </source>
</evidence>
<evidence type="ECO:0007744" key="27">
    <source>
    </source>
</evidence>
<evidence type="ECO:0007744" key="28">
    <source>
    </source>
</evidence>
<evidence type="ECO:0007744" key="29">
    <source>
    </source>
</evidence>
<evidence type="ECO:0007744" key="30">
    <source>
    </source>
</evidence>
<gene>
    <name type="primary">MAP1B</name>
</gene>
<name>MAP1B_HUMAN</name>
<reference key="1">
    <citation type="journal article" date="1994" name="Genomics">
        <title>Cloning of human microtubule-associated protein 1B and the identification of a related gene on chromosome 15.</title>
        <authorList>
            <person name="Lien L.L."/>
            <person name="Feener C."/>
            <person name="Fischbach N."/>
            <person name="Kunkel L.M."/>
        </authorList>
    </citation>
    <scope>NUCLEOTIDE SEQUENCE [MRNA]</scope>
    <scope>VARIANT VAL-594</scope>
    <source>
        <tissue>Fetal brain</tissue>
    </source>
</reference>
<reference key="2">
    <citation type="journal article" date="2003" name="Biomol. Eng.">
        <title>Hmob3 brain-specific sequence is a part of phylogenetically conserved human MAP1B gene 3'-untranslated region.</title>
        <authorList>
            <person name="Dergunova L.V."/>
            <person name="Raevskaya N.M."/>
            <person name="Vladychenskaya I.P."/>
            <person name="Limborska S.A."/>
        </authorList>
    </citation>
    <scope>NUCLEOTIDE SEQUENCE [MRNA]</scope>
    <scope>VARIANT VAL-594</scope>
</reference>
<reference key="3">
    <citation type="journal article" date="2004" name="Nature">
        <title>The DNA sequence and comparative analysis of human chromosome 5.</title>
        <authorList>
            <person name="Schmutz J."/>
            <person name="Martin J."/>
            <person name="Terry A."/>
            <person name="Couronne O."/>
            <person name="Grimwood J."/>
            <person name="Lowry S."/>
            <person name="Gordon L.A."/>
            <person name="Scott D."/>
            <person name="Xie G."/>
            <person name="Huang W."/>
            <person name="Hellsten U."/>
            <person name="Tran-Gyamfi M."/>
            <person name="She X."/>
            <person name="Prabhakar S."/>
            <person name="Aerts A."/>
            <person name="Altherr M."/>
            <person name="Bajorek E."/>
            <person name="Black S."/>
            <person name="Branscomb E."/>
            <person name="Caoile C."/>
            <person name="Challacombe J.F."/>
            <person name="Chan Y.M."/>
            <person name="Denys M."/>
            <person name="Detter J.C."/>
            <person name="Escobar J."/>
            <person name="Flowers D."/>
            <person name="Fotopulos D."/>
            <person name="Glavina T."/>
            <person name="Gomez M."/>
            <person name="Gonzales E."/>
            <person name="Goodstein D."/>
            <person name="Grigoriev I."/>
            <person name="Groza M."/>
            <person name="Hammon N."/>
            <person name="Hawkins T."/>
            <person name="Haydu L."/>
            <person name="Israni S."/>
            <person name="Jett J."/>
            <person name="Kadner K."/>
            <person name="Kimball H."/>
            <person name="Kobayashi A."/>
            <person name="Lopez F."/>
            <person name="Lou Y."/>
            <person name="Martinez D."/>
            <person name="Medina C."/>
            <person name="Morgan J."/>
            <person name="Nandkeshwar R."/>
            <person name="Noonan J.P."/>
            <person name="Pitluck S."/>
            <person name="Pollard M."/>
            <person name="Predki P."/>
            <person name="Priest J."/>
            <person name="Ramirez L."/>
            <person name="Retterer J."/>
            <person name="Rodriguez A."/>
            <person name="Rogers S."/>
            <person name="Salamov A."/>
            <person name="Salazar A."/>
            <person name="Thayer N."/>
            <person name="Tice H."/>
            <person name="Tsai M."/>
            <person name="Ustaszewska A."/>
            <person name="Vo N."/>
            <person name="Wheeler J."/>
            <person name="Wu K."/>
            <person name="Yang J."/>
            <person name="Dickson M."/>
            <person name="Cheng J.-F."/>
            <person name="Eichler E.E."/>
            <person name="Olsen A."/>
            <person name="Pennacchio L.A."/>
            <person name="Rokhsar D.S."/>
            <person name="Richardson P."/>
            <person name="Lucas S.M."/>
            <person name="Myers R.M."/>
            <person name="Rubin E.M."/>
        </authorList>
    </citation>
    <scope>NUCLEOTIDE SEQUENCE [LARGE SCALE GENOMIC DNA]</scope>
</reference>
<reference key="4">
    <citation type="submission" date="2005-07" db="EMBL/GenBank/DDBJ databases">
        <authorList>
            <person name="Mural R.J."/>
            <person name="Istrail S."/>
            <person name="Sutton G.G."/>
            <person name="Florea L."/>
            <person name="Halpern A.L."/>
            <person name="Mobarry C.M."/>
            <person name="Lippert R."/>
            <person name="Walenz B."/>
            <person name="Shatkay H."/>
            <person name="Dew I."/>
            <person name="Miller J.R."/>
            <person name="Flanigan M.J."/>
            <person name="Edwards N.J."/>
            <person name="Bolanos R."/>
            <person name="Fasulo D."/>
            <person name="Halldorsson B.V."/>
            <person name="Hannenhalli S."/>
            <person name="Turner R."/>
            <person name="Yooseph S."/>
            <person name="Lu F."/>
            <person name="Nusskern D.R."/>
            <person name="Shue B.C."/>
            <person name="Zheng X.H."/>
            <person name="Zhong F."/>
            <person name="Delcher A.L."/>
            <person name="Huson D.H."/>
            <person name="Kravitz S.A."/>
            <person name="Mouchard L."/>
            <person name="Reinert K."/>
            <person name="Remington K.A."/>
            <person name="Clark A.G."/>
            <person name="Waterman M.S."/>
            <person name="Eichler E.E."/>
            <person name="Adams M.D."/>
            <person name="Hunkapiller M.W."/>
            <person name="Myers E.W."/>
            <person name="Venter J.C."/>
        </authorList>
    </citation>
    <scope>NUCLEOTIDE SEQUENCE [LARGE SCALE GENOMIC DNA]</scope>
    <scope>VARIANT VAL-594</scope>
</reference>
<reference key="5">
    <citation type="submission" date="2009-10" db="UniProtKB">
        <authorList>
            <person name="Bienvenut W.V."/>
            <person name="Pchelintsev N."/>
            <person name="Adams P.D."/>
        </authorList>
    </citation>
    <scope>PROTEIN SEQUENCE OF 2-31; 55-64; 90-98; 391-429; 520-531; 1052-1070; 1233-1250; 1276-1287; 1462-1476; 1834-1958 AND 1898-1908</scope>
    <scope>CLEAVAGE OF INITIATOR METHIONINE</scope>
    <scope>ACETYLATION AT ALA-2</scope>
    <scope>IDENTIFICATION BY MASS SPECTROMETRY</scope>
    <source>
        <tissue>Lung fibroblast</tissue>
    </source>
</reference>
<reference key="6">
    <citation type="submission" date="2008-12" db="UniProtKB">
        <authorList>
            <person name="Lubec G."/>
            <person name="Afjehi-Sadat L."/>
            <person name="Vishwanath V."/>
            <person name="Chen W.-Q."/>
            <person name="Sun Y."/>
        </authorList>
    </citation>
    <scope>PROTEIN SEQUENCE OF 2347-2370 AND 2382-2409</scope>
    <scope>IDENTIFICATION BY MASS SPECTROMETRY</scope>
    <source>
        <tissue>Brain</tissue>
        <tissue>Cajal-Retzius cell</tissue>
        <tissue>Fetal brain cortex</tissue>
    </source>
</reference>
<reference key="7">
    <citation type="journal article" date="2002" name="J. Cell Biol.">
        <title>Microtubule-associated protein 1B: a neuronal binding partner for gigaxonin.</title>
        <authorList>
            <person name="Ding J."/>
            <person name="Liu J.-J."/>
            <person name="Kowal A.S."/>
            <person name="Nardine T."/>
            <person name="Bhattacharya P."/>
            <person name="Lee A."/>
            <person name="Yang Y."/>
        </authorList>
    </citation>
    <scope>INTERACTION WITH GAN</scope>
</reference>
<reference key="8">
    <citation type="journal article" date="2004" name="J. Neurochem.">
        <title>Cloning of a novel neuronally expressed orphan G-protein-coupled receptor which is up-regulated by erythropoietin, interacts with microtubule-associated protein 1b and colocalizes with the 5-hydroxytryptamine 2a receptor.</title>
        <authorList>
            <person name="Maurer M.H."/>
            <person name="Gruenewald S."/>
            <person name="Gassler N."/>
            <person name="Rossner M."/>
            <person name="Propst F."/>
            <person name="Wuerz R."/>
            <person name="Weber D."/>
            <person name="Kuner T."/>
            <person name="Kuschinsky W."/>
            <person name="Schneider A."/>
        </authorList>
    </citation>
    <scope>INTERACTION WITH TMEM185A</scope>
</reference>
<reference key="9">
    <citation type="journal article" date="2005" name="Nature">
        <title>Gigaxonin-controlled degradation of MAP1B light chain is critical to neuronal survival.</title>
        <authorList>
            <person name="Allen E."/>
            <person name="Ding J."/>
            <person name="Wang W."/>
            <person name="Pramanik S."/>
            <person name="Chou J."/>
            <person name="Yau V."/>
            <person name="Yang Y."/>
        </authorList>
    </citation>
    <scope>INTERACTION WITH GAN</scope>
</reference>
<reference key="10">
    <citation type="journal article" date="2006" name="Cell">
        <title>Global, in vivo, and site-specific phosphorylation dynamics in signaling networks.</title>
        <authorList>
            <person name="Olsen J.V."/>
            <person name="Blagoev B."/>
            <person name="Gnad F."/>
            <person name="Macek B."/>
            <person name="Kumar C."/>
            <person name="Mortensen P."/>
            <person name="Mann M."/>
        </authorList>
    </citation>
    <scope>PHOSPHORYLATION [LARGE SCALE ANALYSIS] AT SER-992; SER-995; SER-1016; SER-1265; SER-1276; SER-1280; THR-1282; SER-1396; SER-1400; SER-1427; SER-1438; SER-1443; SER-1618; SER-1620; SER-1625; SER-1779; SER-1782 AND THR-1788</scope>
    <scope>IDENTIFICATION BY MASS SPECTROMETRY [LARGE SCALE ANALYSIS]</scope>
    <source>
        <tissue>Cervix carcinoma</tissue>
    </source>
</reference>
<reference key="11">
    <citation type="journal article" date="2007" name="Electrophoresis">
        <title>Toward a global characterization of the phosphoproteome in prostate cancer cells: identification of phosphoproteins in the LNCaP cell line.</title>
        <authorList>
            <person name="Giorgianni F."/>
            <person name="Zhao Y."/>
            <person name="Desiderio D.M."/>
            <person name="Beranova-Giorgianni S."/>
        </authorList>
    </citation>
    <scope>IDENTIFICATION BY MASS SPECTROMETRY [LARGE SCALE ANALYSIS]</scope>
    <source>
        <tissue>Prostate cancer</tissue>
    </source>
</reference>
<reference key="12">
    <citation type="journal article" date="2007" name="Science">
        <title>ATM and ATR substrate analysis reveals extensive protein networks responsive to DNA damage.</title>
        <authorList>
            <person name="Matsuoka S."/>
            <person name="Ballif B.A."/>
            <person name="Smogorzewska A."/>
            <person name="McDonald E.R. III"/>
            <person name="Hurov K.E."/>
            <person name="Luo J."/>
            <person name="Bakalarski C.E."/>
            <person name="Zhao Z."/>
            <person name="Solimini N."/>
            <person name="Lerenthal Y."/>
            <person name="Shiloh Y."/>
            <person name="Gygi S.P."/>
            <person name="Elledge S.J."/>
        </authorList>
    </citation>
    <scope>PHOSPHORYLATION [LARGE SCALE ANALYSIS] AT SER-336</scope>
    <scope>IDENTIFICATION BY MASS SPECTROMETRY [LARGE SCALE ANALYSIS]</scope>
    <source>
        <tissue>Embryonic kidney</tissue>
    </source>
</reference>
<reference key="13">
    <citation type="journal article" date="2008" name="Biochem. J.">
        <title>MAP1 structural organization in Drosophila: in vivo analysis of FUTSCH reveals heavy- and light-chain subunits generated by proteolytic processing at a conserved cleavage site.</title>
        <authorList>
            <person name="Zou B."/>
            <person name="Yan H."/>
            <person name="Kawasaki F."/>
            <person name="Ordway R.W."/>
        </authorList>
    </citation>
    <scope>CLEAVAGE SITE</scope>
</reference>
<reference key="14">
    <citation type="journal article" date="2008" name="J. Biol. Chem.">
        <title>DAPK-1 binding to a linear peptide motif in MAP1B stimulates autophagy and membrane blebbing.</title>
        <authorList>
            <person name="Harrison B."/>
            <person name="Kraus M."/>
            <person name="Burch L."/>
            <person name="Stevens C."/>
            <person name="Craig A."/>
            <person name="Gordon-Weeks P."/>
            <person name="Hupp T.R."/>
        </authorList>
    </citation>
    <scope>FUNCTION</scope>
    <scope>SUBCELLULAR LOCATION</scope>
    <scope>INTERACTION WITH DAPK1</scope>
</reference>
<reference key="15">
    <citation type="journal article" date="2008" name="J. Proteome Res.">
        <title>Phosphoproteome of resting human platelets.</title>
        <authorList>
            <person name="Zahedi R.P."/>
            <person name="Lewandrowski U."/>
            <person name="Wiesner J."/>
            <person name="Wortelkamp S."/>
            <person name="Moebius J."/>
            <person name="Schuetz C."/>
            <person name="Walter U."/>
            <person name="Gambaryan S."/>
            <person name="Sickmann A."/>
        </authorList>
    </citation>
    <scope>PHOSPHORYLATION [LARGE SCALE ANALYSIS] AT SER-1427</scope>
    <scope>IDENTIFICATION BY MASS SPECTROMETRY [LARGE SCALE ANALYSIS]</scope>
    <source>
        <tissue>Platelet</tissue>
    </source>
</reference>
<reference key="16">
    <citation type="journal article" date="2008" name="Proc. Natl. Acad. Sci. U.S.A.">
        <title>A quantitative atlas of mitotic phosphorylation.</title>
        <authorList>
            <person name="Dephoure N."/>
            <person name="Zhou C."/>
            <person name="Villen J."/>
            <person name="Beausoleil S.A."/>
            <person name="Bakalarski C.E."/>
            <person name="Elledge S.J."/>
            <person name="Gygi S.P."/>
        </authorList>
    </citation>
    <scope>IDENTIFICATION BY MASS SPECTROMETRY [LARGE SCALE ANALYSIS]</scope>
    <source>
        <tissue>Cervix carcinoma</tissue>
    </source>
</reference>
<reference key="17">
    <citation type="journal article" date="2008" name="Proteomics">
        <title>Large-scale phosphoproteome analysis of human liver tissue by enrichment and fractionation of phosphopeptides with strong anion exchange chromatography.</title>
        <authorList>
            <person name="Han G."/>
            <person name="Ye M."/>
            <person name="Zhou H."/>
            <person name="Jiang X."/>
            <person name="Feng S."/>
            <person name="Jiang X."/>
            <person name="Tian R."/>
            <person name="Wan D."/>
            <person name="Zou H."/>
            <person name="Gu J."/>
        </authorList>
    </citation>
    <scope>PHOSPHORYLATION [LARGE SCALE ANALYSIS] AT SER-1016</scope>
    <scope>IDENTIFICATION BY MASS SPECTROMETRY [LARGE SCALE ANALYSIS]</scope>
    <source>
        <tissue>Liver</tissue>
    </source>
</reference>
<reference key="18">
    <citation type="journal article" date="2009" name="Anal. Chem.">
        <title>Lys-N and trypsin cover complementary parts of the phosphoproteome in a refined SCX-based approach.</title>
        <authorList>
            <person name="Gauci S."/>
            <person name="Helbig A.O."/>
            <person name="Slijper M."/>
            <person name="Krijgsveld J."/>
            <person name="Heck A.J."/>
            <person name="Mohammed S."/>
        </authorList>
    </citation>
    <scope>IDENTIFICATION BY MASS SPECTROMETRY [LARGE SCALE ANALYSIS]</scope>
</reference>
<reference key="19">
    <citation type="journal article" date="2009" name="Mol. Cell. Proteomics">
        <title>Large-scale proteomics analysis of the human kinome.</title>
        <authorList>
            <person name="Oppermann F.S."/>
            <person name="Gnad F."/>
            <person name="Olsen J.V."/>
            <person name="Hornberger R."/>
            <person name="Greff Z."/>
            <person name="Keri G."/>
            <person name="Mann M."/>
            <person name="Daub H."/>
        </authorList>
    </citation>
    <scope>PHOSPHORYLATION [LARGE SCALE ANALYSIS] AT SER-1779</scope>
    <scope>IDENTIFICATION BY MASS SPECTROMETRY [LARGE SCALE ANALYSIS]</scope>
</reference>
<reference key="20">
    <citation type="journal article" date="2010" name="Sci. Signal.">
        <title>Quantitative phosphoproteomics reveals widespread full phosphorylation site occupancy during mitosis.</title>
        <authorList>
            <person name="Olsen J.V."/>
            <person name="Vermeulen M."/>
            <person name="Santamaria A."/>
            <person name="Kumar C."/>
            <person name="Miller M.L."/>
            <person name="Jensen L.J."/>
            <person name="Gnad F."/>
            <person name="Cox J."/>
            <person name="Jensen T.S."/>
            <person name="Nigg E.A."/>
            <person name="Brunak S."/>
            <person name="Mann M."/>
        </authorList>
    </citation>
    <scope>PHOSPHORYLATION [LARGE SCALE ANALYSIS] AT SER-831; SER-832; SER-1396; SER-1400 AND SER-1501</scope>
    <scope>IDENTIFICATION BY MASS SPECTROMETRY [LARGE SCALE ANALYSIS]</scope>
    <source>
        <tissue>Cervix carcinoma</tissue>
    </source>
</reference>
<reference key="21">
    <citation type="journal article" date="2011" name="BMC Syst. Biol.">
        <title>Initial characterization of the human central proteome.</title>
        <authorList>
            <person name="Burkard T.R."/>
            <person name="Planyavsky M."/>
            <person name="Kaupe I."/>
            <person name="Breitwieser F.P."/>
            <person name="Buerckstuemmer T."/>
            <person name="Bennett K.L."/>
            <person name="Superti-Furga G."/>
            <person name="Colinge J."/>
        </authorList>
    </citation>
    <scope>IDENTIFICATION BY MASS SPECTROMETRY [LARGE SCALE ANALYSIS]</scope>
</reference>
<reference key="22">
    <citation type="journal article" date="2011" name="Sci. Signal.">
        <title>System-wide temporal characterization of the proteome and phosphoproteome of human embryonic stem cell differentiation.</title>
        <authorList>
            <person name="Rigbolt K.T."/>
            <person name="Prokhorova T.A."/>
            <person name="Akimov V."/>
            <person name="Henningsen J."/>
            <person name="Johansen P.T."/>
            <person name="Kratchmarova I."/>
            <person name="Kassem M."/>
            <person name="Mann M."/>
            <person name="Olsen J.V."/>
            <person name="Blagoev B."/>
        </authorList>
    </citation>
    <scope>ACETYLATION [LARGE SCALE ANALYSIS] AT ALA-2</scope>
    <scope>PHOSPHORYLATION [LARGE SCALE ANALYSIS] AT SER-828; SER-831; SER-832; SER-937; SER-992; SER-995; SER-1016; SER-1144; SER-1154; SER-1156; SER-1208; SER-1252; SER-1256; SER-1260; SER-1265; THR-1282; SER-1378; SER-1387; SER-1389; SER-1400; SER-1427; SER-1443; SER-1501; SER-1653; SER-1779; SER-1782; SER-1785; THR-1788; SER-1797; SER-1915; SER-1917; SER-1965; SER-2271 AND SER-2289</scope>
    <scope>CLEAVAGE OF INITIATOR METHIONINE [LARGE SCALE ANALYSIS]</scope>
    <scope>IDENTIFICATION BY MASS SPECTROMETRY [LARGE SCALE ANALYSIS]</scope>
</reference>
<reference key="23">
    <citation type="journal article" date="2013" name="J. Proteome Res.">
        <title>Toward a comprehensive characterization of a human cancer cell phosphoproteome.</title>
        <authorList>
            <person name="Zhou H."/>
            <person name="Di Palma S."/>
            <person name="Preisinger C."/>
            <person name="Peng M."/>
            <person name="Polat A.N."/>
            <person name="Heck A.J."/>
            <person name="Mohammed S."/>
        </authorList>
    </citation>
    <scope>PHOSPHORYLATION [LARGE SCALE ANALYSIS] AT SER-343; SER-541; SER-614; SER-831; SER-832; SER-937; THR-948; SER-995; SER-1016; SER-1144; SER-1154; SER-1208; SER-1252; SER-1256; SER-1260; SER-1262; SER-1265; SER-1276; THR-1282; SER-1298; SER-1322; SER-1389; SER-1396; SER-1400; SER-1427; SER-1438; SER-1443; SER-1501; SER-1779; SER-1782; SER-1785; THR-1788; SER-1793; SER-1899; SER-1915; SER-1917; SER-1919; THR-1932; SER-1939; THR-1949; SER-1965; THR-2034; SER-2209; SER-2271 AND THR-2305</scope>
    <scope>IDENTIFICATION BY MASS SPECTROMETRY [LARGE SCALE ANALYSIS]</scope>
    <source>
        <tissue>Erythroleukemia</tissue>
    </source>
</reference>
<reference key="24">
    <citation type="journal article" date="2013" name="Nature">
        <title>Autophagy promotes primary ciliogenesis by removing OFD1 from centriolar satellites.</title>
        <authorList>
            <person name="Tang Z."/>
            <person name="Lin M.G."/>
            <person name="Stowe T.R."/>
            <person name="Chen S."/>
            <person name="Zhu M."/>
            <person name="Stearns T."/>
            <person name="Franco B."/>
            <person name="Zhong Q."/>
        </authorList>
    </citation>
    <scope>INTERACTION WITH MAP1LC3B</scope>
</reference>
<reference key="25">
    <citation type="journal article" date="2014" name="J. Proteomics">
        <title>An enzyme assisted RP-RPLC approach for in-depth analysis of human liver phosphoproteome.</title>
        <authorList>
            <person name="Bian Y."/>
            <person name="Song C."/>
            <person name="Cheng K."/>
            <person name="Dong M."/>
            <person name="Wang F."/>
            <person name="Huang J."/>
            <person name="Sun D."/>
            <person name="Wang L."/>
            <person name="Ye M."/>
            <person name="Zou H."/>
        </authorList>
    </citation>
    <scope>PHOSPHORYLATION [LARGE SCALE ANALYSIS] AT SER-831; SER-832; SER-1265; SER-1400; SER-1653; SER-1666; SER-1785 AND THR-1932</scope>
    <scope>IDENTIFICATION BY MASS SPECTROMETRY [LARGE SCALE ANALYSIS]</scope>
    <source>
        <tissue>Liver</tissue>
    </source>
</reference>
<reference key="26">
    <citation type="journal article" date="2015" name="PLoS ONE">
        <title>Autism and intellectual disability-associated KIRREL3 interacts with neuronal proteins MAP1B and MYO16 with potential roles in neurodevelopment.</title>
        <authorList>
            <person name="Liu Y.F."/>
            <person name="Sowell S.M."/>
            <person name="Luo Y."/>
            <person name="Chaubey A."/>
            <person name="Cameron R.S."/>
            <person name="Kim H.G."/>
            <person name="Srivastava A.K."/>
        </authorList>
    </citation>
    <scope>INTERACTION WITH KIRREL3</scope>
</reference>
<reference key="27">
    <citation type="journal article" date="2018" name="PLoS Genet.">
        <authorList>
            <consortium name="Epi4K Consortium, Epilepsy Phenome/Genome Project"/>
            <person name="Heinzen E.L."/>
            <person name="O'Neill A.C."/>
            <person name="Zhu X."/>
            <person name="Allen A.S."/>
            <person name="Bahlo M."/>
            <person name="Chelly J."/>
            <person name="Chen M.H."/>
            <person name="Dobyns W.B."/>
            <person name="Freytag S."/>
            <person name="Guerrini R."/>
            <person name="Leventer R.J."/>
            <person name="Poduri A."/>
            <person name="Robertson S.P."/>
            <person name="Walsh C.A."/>
            <person name="Zhang M."/>
        </authorList>
    </citation>
    <scope>INVOLVEMENT IN PVNH9</scope>
    <scope>VARIANTS PVNH9 303-ARG--LEU-2468 DEL; 532-GLN--LEU-2468 DEL AND 1106-ARG--LEU-2468 DEL</scope>
</reference>
<reference key="28">
    <citation type="journal article" date="2018" name="Nat. Commun.">
        <title>MAP1B mutations cause intellectual disability and extensive white matter deficit.</title>
        <authorList>
            <person name="Walters G.B."/>
            <person name="Gustafsson O."/>
            <person name="Sveinbjornsson G."/>
            <person name="Eiriksdottir V.K."/>
            <person name="Agustsdottir A.B."/>
            <person name="Jonsdottir G.A."/>
            <person name="Steinberg S."/>
            <person name="Gunnarsson A.F."/>
            <person name="Magnusson M.I."/>
            <person name="Unnsteinsdottir U."/>
            <person name="Lee A.L."/>
            <person name="Jonasdottir A."/>
            <person name="Sigurdsson A."/>
            <person name="Jonasdottir A."/>
            <person name="Skuladottir A."/>
            <person name="Jonsson L."/>
            <person name="Nawaz M.S."/>
            <person name="Sulem P."/>
            <person name="Frigge M."/>
            <person name="Ingason A."/>
            <person name="Love A."/>
            <person name="Norddhal G.L."/>
            <person name="Zervas M."/>
            <person name="Gudbjartsson D.F."/>
            <person name="Ulfarsson M.O."/>
            <person name="Saemundsen E."/>
            <person name="Stefansson H."/>
            <person name="Stefansson K."/>
        </authorList>
    </citation>
    <scope>VARIANTS PVNH9 1032-GLU--LEU-2468 DEL AND 1664-ARG--LEU-2468 DEL</scope>
    <scope>CHARACTERIZATION OF VARIANTS PVNH9 1032-GLU--LEU-2468 DEL AND 1664-ARG--LEU-2468 DEL</scope>
</reference>
<reference key="29">
    <citation type="journal article" date="2019" name="Am. J. Med. Genet. A">
        <title>MAP1B related syndrome: Case presentation and review of literature.</title>
        <authorList>
            <person name="Julca D.M."/>
            <person name="Diaz J."/>
            <person name="Berger S."/>
            <person name="Leon E."/>
        </authorList>
    </citation>
    <scope>VARIANT PVNH9 679-GLU--LEU-2468 DEL</scope>
</reference>
<reference key="30">
    <citation type="journal article" date="2006" name="Science">
        <title>The consensus coding sequences of human breast and colorectal cancers.</title>
        <authorList>
            <person name="Sjoeblom T."/>
            <person name="Jones S."/>
            <person name="Wood L.D."/>
            <person name="Parsons D.W."/>
            <person name="Lin J."/>
            <person name="Barber T.D."/>
            <person name="Mandelker D."/>
            <person name="Leary R.J."/>
            <person name="Ptak J."/>
            <person name="Silliman N."/>
            <person name="Szabo S."/>
            <person name="Buckhaults P."/>
            <person name="Farrell C."/>
            <person name="Meeh P."/>
            <person name="Markowitz S.D."/>
            <person name="Willis J."/>
            <person name="Dawson D."/>
            <person name="Willson J.K.V."/>
            <person name="Gazdar A.F."/>
            <person name="Hartigan J."/>
            <person name="Wu L."/>
            <person name="Liu C."/>
            <person name="Parmigiani G."/>
            <person name="Park B.H."/>
            <person name="Bachman K.E."/>
            <person name="Papadopoulos N."/>
            <person name="Vogelstein B."/>
            <person name="Kinzler K.W."/>
            <person name="Velculescu V.E."/>
        </authorList>
    </citation>
    <scope>VARIANTS [LARGE SCALE ANALYSIS] GLN-326 AND MET-574</scope>
</reference>
<reference key="31">
    <citation type="journal article" date="2020" name="JCI Insight">
        <title>Mutations of MAP1B encoding a microtubule-associated phosphoprotein cause sensorineural hearing loss.</title>
        <authorList>
            <person name="Cui L."/>
            <person name="Zheng J."/>
            <person name="Zhao Q."/>
            <person name="Chen J.R."/>
            <person name="Liu H."/>
            <person name="Peng G."/>
            <person name="Wu Y."/>
            <person name="Chen C."/>
            <person name="He Q."/>
            <person name="Shi H."/>
            <person name="Yin S."/>
            <person name="Friedman R.A."/>
            <person name="Chen Y."/>
            <person name="Guan M.X."/>
        </authorList>
    </citation>
    <scope>VARIANT DFNA83 GLY-1400</scope>
    <scope>CHARACTERIZATION OF VARIANT DFNA83 GLY-1400</scope>
    <scope>INVOLVEMENT IN DFNA83</scope>
    <scope>FUNCTION</scope>
    <scope>VARIANTS THR-923 AND LEU-1838</scope>
</reference>
<sequence length="2468" mass="270634">MATVVVEATEPEPSGSIANPAASTSPSLSHRFLDSKFYLLVVVGEIVTEEHLRRAIGNIELGIRSWDTNLIECNLDQELKLFVSRHSARFSPEVPGQKILHHRSDVLETVVLINPSDEAVSTEVRLMITDAARHKLLVLTGQCFENTGELILQSGSFSFQNFIEIFTDQEIGELLSTTHPANKASLTLFCPEEGDWKNSNLDRHNLQDFINIKLNSASILPEMEGLSEFTEYLSESVEVPSPFDILEPPTSGGFLKLSKPCCYIFPGGRGDSALFAVNGFNMLINGGSERKSCFWKLIRHLDRVDSILLTHIGDDNLPGINSMLQRKIAELEEEQSQGSTTNSDWMKNLISPDLGVVFLNVPENLKNPEPNIKMKRSIEEACFTLQYLNKLSMKPEPLFRSVGNTIDPVILFQKMGVGKLEMYVLNPVKSSKEMQYFMQQWTGTNKDKAEFILPNGQEVDLPISYLTSVSSLIVWHPANPAEKIIRVLFPGNSTQYNILEGLEKLKHLDFLKQPLATQKDLTGQVPTPVVKQTKLKQRADSRESLKPAAKPLPSKSVRKESKEETPEVTKVNHVEKPPKVESKEKVMVKKDKPIKTETKPSVTEKEVPSKEEPSPVKAEVAEKQATDVKPKAAKEKTVKKETKVKPEDKKEEKEKPKKEVAKKEDKTPIKKEEKPKKEEVKKEVKKEIKKEEKKEPKKEVKKETPPKEVKKEVKKEEKKEVKKEEKEPKKEIKKLPKDAKKSSTPLSEAKKPAALKPKVPKKEESVKKDSVAAGKPKEKGKIKVIKKEGKAAEAVAAAVGTGATTAAVMAAAGIAAIGPAKELEAERSLMSSPEDLTKDFEELKAEEVDVTKDIKPQLELIEDEEKLKETEPVEAYVIQKEREVTKGPAESPDEGITTTEGEGECEQTPEELEPVEKQGVDDIEKFEDEGAGFEESSETGDYEEKAETEEAEEPEEDGEEHVCVSASKHSPTEDEESAKAEADAYIREKRESVASGDDRAEEDMDEAIEKGEAEQSEEEADEEDKAEDAREEEYEPEKMEAEDYVMAVVDKAAEAGGAEEQYGFLTTPTKQLGAQSPGREPASSIHDETLPGGSESEATASDEENREDQPEEFTATSGYTQSTIEISSEPTPMDEMSTPRDVMSDETNNEETESPSQEFVNITKYESSLYSQEYSKPADVTPLNGFSEGSKTDATDGKDYNASASTISPPSSMEEDKFSRSALRDAYCSEVKASTTLDIKDSISAVSSEKVSPSKSPSLSPSPPSPLEKTPLGERSVNFSLTPNEIKVSAEAEVAPVSPEVTQEVVEEHCASPEDKTLEVVSPSQSVTGSAGHTPYYQSPTDEKSSHLPTEVIEKPPAVPVSFEFSDAKDENERASVSPMDEPVPDSESPIEKVLSPLRSPPLIGSESAYESFLSADDKASGRGAESPFEEKSGKQGSPDQVSPVSEMTSTSLYQDKQEGKSTDFAPIKEDFGQEKKTDDVEAMSSQPALALDERKLGDVSPTQIDVSQFGSFKEDTKMSISEGTVSDKSATPVDEGVAEDTYSHMEGVASVSTASVATSSFPEPTTDDVSPSLHAEVGSPHSTEVDDSLSVSVVQTPTTFQETEMSPSKEECPRPMSISPPDFSPKTAKSRTPVQDHRSEQSSMSIEFGQESPEQSLAMDFSRQSPDHPTVGAGVLHITENGPTEVDYSPSDMQDSSLSHKIPPMEEPSYTQDNDLSELISVSQVEASPSTSSAHTPSQIASPLQEDTLSDVAPPRDMSLYASLTSEKVQSLEGEKLSPKSDISPLTPRESSPLYSPTFSDSTSAVKEKTATCHSSSSPPIDAASAEPYGFRASVLFDTMQHHLALNRDLSTPGLEKDSGGKTPGDFSYAYQKPEETTRSPDEEDYDYESYEKTTRTSDVGGYYYEKIERTTKSPSDSGYSYETIGKTTKTPEDGDYSYEIIEKTTRTPEEGGYSYDISEKTTSPPEVSGYSYEKTERSRRLLDDISNGYDDSEDGGHTLGDPSYSYETTEKITSFPESEGYSYETSTKTTRTPDTSTYCYETAEKITRTPQASTYSYETSDLCYTAEKKSPSEARQDVDLCLVSSCEYKHPKTELSPSFINPNPLEWFASEEPTEESEKPLTQSGGAPPPPGGKQQGRQCDETPPTSVSESAPSQTDSDVPPETEECPSITADANIDSEDESETIPTDKTVTYKHMDPPPAPVQDRSPSPRHPDVSMVDPEALAIEQNLGKALKKDLKEKTKTKKPGTKTKSSSPVKKSDGKSKPLAASPKPAGLKESSDKVSRVASPKKKESVEKAAKPTTTPEVKAARGEEKDKETKNAANASASKSAKTATAGPGTTKTTKSSAVPPGLPVYLDLCYIPNHSNSKNVDVEFFKRVRSSYYVVSGNDPAAEEPSRAVLDALLEGKAQWGSNMQVTLIPTHDSEVMREWYQETHEKQQDLNIMVLASSSTVVMQDESFPACKIEL</sequence>